<gene>
    <name type="ordered locus">Mkms_2298</name>
</gene>
<organism>
    <name type="scientific">Mycobacterium sp. (strain KMS)</name>
    <dbReference type="NCBI Taxonomy" id="189918"/>
    <lineage>
        <taxon>Bacteria</taxon>
        <taxon>Bacillati</taxon>
        <taxon>Actinomycetota</taxon>
        <taxon>Actinomycetes</taxon>
        <taxon>Mycobacteriales</taxon>
        <taxon>Mycobacteriaceae</taxon>
        <taxon>Mycobacterium</taxon>
    </lineage>
</organism>
<keyword id="KW-0963">Cytoplasm</keyword>
<keyword id="KW-0238">DNA-binding</keyword>
<keyword id="KW-0804">Transcription</keyword>
<keyword id="KW-0805">Transcription regulation</keyword>
<reference key="1">
    <citation type="submission" date="2006-12" db="EMBL/GenBank/DDBJ databases">
        <title>Complete sequence of chromosome of Mycobacterium sp. KMS.</title>
        <authorList>
            <consortium name="US DOE Joint Genome Institute"/>
            <person name="Copeland A."/>
            <person name="Lucas S."/>
            <person name="Lapidus A."/>
            <person name="Barry K."/>
            <person name="Detter J.C."/>
            <person name="Glavina del Rio T."/>
            <person name="Hammon N."/>
            <person name="Israni S."/>
            <person name="Dalin E."/>
            <person name="Tice H."/>
            <person name="Pitluck S."/>
            <person name="Kiss H."/>
            <person name="Brettin T."/>
            <person name="Bruce D."/>
            <person name="Han C."/>
            <person name="Tapia R."/>
            <person name="Gilna P."/>
            <person name="Schmutz J."/>
            <person name="Larimer F."/>
            <person name="Land M."/>
            <person name="Hauser L."/>
            <person name="Kyrpides N."/>
            <person name="Mikhailova N."/>
            <person name="Miller C.D."/>
            <person name="Richardson P."/>
        </authorList>
    </citation>
    <scope>NUCLEOTIDE SEQUENCE [LARGE SCALE GENOMIC DNA]</scope>
    <source>
        <strain>KMS</strain>
    </source>
</reference>
<sequence>MSGHSKWATTKHKKAIIDARRGKNFAKLIKNIEVAARTGGGDPGGNPTLYDAIQKAKKSSVPNDNIERARKRGAGEEAGGADWQTITYEGYGPNGVAVLIECLTDNRNRAAGEVRVAMTRNGGNMADPGSVSYLFSRKGVITLEKNGLSEDDVLMAVLEAGAEEVTDLGDSFEIISEPTDLVAVRTALQDAGIDYDSADASFQPSVTVPLDAEGARKVMKLVDALEDSDDVQDVYTNADIPDEILAQLEE</sequence>
<name>Y2298_MYCSK</name>
<feature type="chain" id="PRO_1000045340" description="Probable transcriptional regulatory protein Mkms_2298">
    <location>
        <begin position="1"/>
        <end position="250"/>
    </location>
</feature>
<evidence type="ECO:0000255" key="1">
    <source>
        <dbReference type="HAMAP-Rule" id="MF_00693"/>
    </source>
</evidence>
<proteinExistence type="inferred from homology"/>
<comment type="subcellular location">
    <subcellularLocation>
        <location evidence="1">Cytoplasm</location>
    </subcellularLocation>
</comment>
<comment type="similarity">
    <text evidence="1">Belongs to the TACO1 family.</text>
</comment>
<accession>A1UF88</accession>
<protein>
    <recommendedName>
        <fullName evidence="1">Probable transcriptional regulatory protein Mkms_2298</fullName>
    </recommendedName>
</protein>
<dbReference type="EMBL" id="CP000518">
    <property type="protein sequence ID" value="ABL91496.1"/>
    <property type="molecule type" value="Genomic_DNA"/>
</dbReference>
<dbReference type="SMR" id="A1UF88"/>
<dbReference type="STRING" id="189918.Mkms_2298"/>
<dbReference type="KEGG" id="mkm:Mkms_2298"/>
<dbReference type="HOGENOM" id="CLU_062974_2_2_11"/>
<dbReference type="OrthoDB" id="9781053at2"/>
<dbReference type="GO" id="GO:0005829">
    <property type="term" value="C:cytosol"/>
    <property type="evidence" value="ECO:0007669"/>
    <property type="project" value="TreeGrafter"/>
</dbReference>
<dbReference type="GO" id="GO:0003677">
    <property type="term" value="F:DNA binding"/>
    <property type="evidence" value="ECO:0007669"/>
    <property type="project" value="UniProtKB-UniRule"/>
</dbReference>
<dbReference type="GO" id="GO:0006355">
    <property type="term" value="P:regulation of DNA-templated transcription"/>
    <property type="evidence" value="ECO:0007669"/>
    <property type="project" value="UniProtKB-UniRule"/>
</dbReference>
<dbReference type="FunFam" id="1.10.10.200:FF:000002">
    <property type="entry name" value="Probable transcriptional regulatory protein CLM62_37755"/>
    <property type="match status" value="1"/>
</dbReference>
<dbReference type="FunFam" id="3.30.70.980:FF:000006">
    <property type="entry name" value="Probable transcriptional regulatory protein J113_18170"/>
    <property type="match status" value="1"/>
</dbReference>
<dbReference type="Gene3D" id="1.10.10.200">
    <property type="match status" value="1"/>
</dbReference>
<dbReference type="Gene3D" id="3.30.70.980">
    <property type="match status" value="2"/>
</dbReference>
<dbReference type="HAMAP" id="MF_00693">
    <property type="entry name" value="Transcrip_reg_TACO1"/>
    <property type="match status" value="1"/>
</dbReference>
<dbReference type="InterPro" id="IPR017856">
    <property type="entry name" value="Integrase-like_N"/>
</dbReference>
<dbReference type="InterPro" id="IPR048300">
    <property type="entry name" value="TACO1_YebC-like_2nd/3rd_dom"/>
</dbReference>
<dbReference type="InterPro" id="IPR049083">
    <property type="entry name" value="TACO1_YebC_N"/>
</dbReference>
<dbReference type="InterPro" id="IPR002876">
    <property type="entry name" value="Transcrip_reg_TACO1-like"/>
</dbReference>
<dbReference type="InterPro" id="IPR026564">
    <property type="entry name" value="Transcrip_reg_TACO1-like_dom3"/>
</dbReference>
<dbReference type="InterPro" id="IPR029072">
    <property type="entry name" value="YebC-like"/>
</dbReference>
<dbReference type="NCBIfam" id="NF001030">
    <property type="entry name" value="PRK00110.1"/>
    <property type="match status" value="1"/>
</dbReference>
<dbReference type="NCBIfam" id="NF009044">
    <property type="entry name" value="PRK12378.1"/>
    <property type="match status" value="1"/>
</dbReference>
<dbReference type="NCBIfam" id="TIGR01033">
    <property type="entry name" value="YebC/PmpR family DNA-binding transcriptional regulator"/>
    <property type="match status" value="1"/>
</dbReference>
<dbReference type="PANTHER" id="PTHR12532:SF6">
    <property type="entry name" value="TRANSCRIPTIONAL REGULATORY PROTEIN YEBC-RELATED"/>
    <property type="match status" value="1"/>
</dbReference>
<dbReference type="PANTHER" id="PTHR12532">
    <property type="entry name" value="TRANSLATIONAL ACTIVATOR OF CYTOCHROME C OXIDASE 1"/>
    <property type="match status" value="1"/>
</dbReference>
<dbReference type="Pfam" id="PF20772">
    <property type="entry name" value="TACO1_YebC_N"/>
    <property type="match status" value="1"/>
</dbReference>
<dbReference type="Pfam" id="PF01709">
    <property type="entry name" value="Transcrip_reg"/>
    <property type="match status" value="1"/>
</dbReference>
<dbReference type="SUPFAM" id="SSF75625">
    <property type="entry name" value="YebC-like"/>
    <property type="match status" value="1"/>
</dbReference>